<gene>
    <name evidence="1" type="primary">tfe</name>
    <name type="ordered locus">TK2024</name>
</gene>
<proteinExistence type="evidence at protein level"/>
<dbReference type="EMBL" id="AP006878">
    <property type="protein sequence ID" value="BAD86213.1"/>
    <property type="molecule type" value="Genomic_DNA"/>
</dbReference>
<dbReference type="RefSeq" id="WP_011250974.1">
    <property type="nucleotide sequence ID" value="NC_006624.1"/>
</dbReference>
<dbReference type="PDB" id="6KF4">
    <property type="method" value="EM"/>
    <property type="resolution" value="3.97 A"/>
    <property type="chains" value="G=1-185"/>
</dbReference>
<dbReference type="PDB" id="6KF9">
    <property type="method" value="EM"/>
    <property type="resolution" value="3.79 A"/>
    <property type="chains" value="G=1-185"/>
</dbReference>
<dbReference type="PDBsum" id="6KF4"/>
<dbReference type="PDBsum" id="6KF9"/>
<dbReference type="SMR" id="Q5JDD5"/>
<dbReference type="FunCoup" id="Q5JDD5">
    <property type="interactions" value="8"/>
</dbReference>
<dbReference type="STRING" id="69014.TK2024"/>
<dbReference type="EnsemblBacteria" id="BAD86213">
    <property type="protein sequence ID" value="BAD86213"/>
    <property type="gene ID" value="TK2024"/>
</dbReference>
<dbReference type="GeneID" id="78448559"/>
<dbReference type="KEGG" id="tko:TK2024"/>
<dbReference type="PATRIC" id="fig|69014.16.peg.1978"/>
<dbReference type="eggNOG" id="arCOG04270">
    <property type="taxonomic scope" value="Archaea"/>
</dbReference>
<dbReference type="HOGENOM" id="CLU_100097_0_0_2"/>
<dbReference type="InParanoid" id="Q5JDD5"/>
<dbReference type="OrthoDB" id="5935at2157"/>
<dbReference type="PhylomeDB" id="Q5JDD5"/>
<dbReference type="Proteomes" id="UP000000536">
    <property type="component" value="Chromosome"/>
</dbReference>
<dbReference type="GO" id="GO:0003677">
    <property type="term" value="F:DNA binding"/>
    <property type="evidence" value="ECO:0007669"/>
    <property type="project" value="UniProtKB-KW"/>
</dbReference>
<dbReference type="GO" id="GO:0006355">
    <property type="term" value="P:regulation of DNA-templated transcription"/>
    <property type="evidence" value="ECO:0007669"/>
    <property type="project" value="InterPro"/>
</dbReference>
<dbReference type="GO" id="GO:0006367">
    <property type="term" value="P:transcription initiation at RNA polymerase II promoter"/>
    <property type="evidence" value="ECO:0007669"/>
    <property type="project" value="InterPro"/>
</dbReference>
<dbReference type="Gene3D" id="1.10.10.10">
    <property type="entry name" value="Winged helix-like DNA-binding domain superfamily/Winged helix DNA-binding domain"/>
    <property type="match status" value="1"/>
</dbReference>
<dbReference type="HAMAP" id="MF_01909">
    <property type="entry name" value="TFE_arch"/>
    <property type="match status" value="1"/>
</dbReference>
<dbReference type="InterPro" id="IPR016481">
    <property type="entry name" value="TF_E_archaea"/>
</dbReference>
<dbReference type="InterPro" id="IPR039997">
    <property type="entry name" value="TFE"/>
</dbReference>
<dbReference type="InterPro" id="IPR017919">
    <property type="entry name" value="TFIIE/TFIIEa_HTH"/>
</dbReference>
<dbReference type="InterPro" id="IPR002853">
    <property type="entry name" value="TFIIE_asu"/>
</dbReference>
<dbReference type="InterPro" id="IPR024550">
    <property type="entry name" value="TFIIEa/SarR/Rpc3_HTH_dom"/>
</dbReference>
<dbReference type="InterPro" id="IPR036388">
    <property type="entry name" value="WH-like_DNA-bd_sf"/>
</dbReference>
<dbReference type="InterPro" id="IPR036390">
    <property type="entry name" value="WH_DNA-bd_sf"/>
</dbReference>
<dbReference type="NCBIfam" id="NF004910">
    <property type="entry name" value="PRK06266.1"/>
    <property type="match status" value="1"/>
</dbReference>
<dbReference type="NCBIfam" id="TIGR00373">
    <property type="entry name" value="transcription factor E"/>
    <property type="match status" value="1"/>
</dbReference>
<dbReference type="PANTHER" id="PTHR13097:SF7">
    <property type="entry name" value="GENERAL TRANSCRIPTION FACTOR IIE SUBUNIT 1"/>
    <property type="match status" value="1"/>
</dbReference>
<dbReference type="PANTHER" id="PTHR13097">
    <property type="entry name" value="TRANSCRIPTION INITIATION FACTOR IIE, ALPHA SUBUNIT"/>
    <property type="match status" value="1"/>
</dbReference>
<dbReference type="Pfam" id="PF02002">
    <property type="entry name" value="TFIIE_alpha"/>
    <property type="match status" value="1"/>
</dbReference>
<dbReference type="PIRSF" id="PIRSF006373">
    <property type="entry name" value="TF_E_archaea"/>
    <property type="match status" value="1"/>
</dbReference>
<dbReference type="SMART" id="SM00531">
    <property type="entry name" value="TFIIE"/>
    <property type="match status" value="1"/>
</dbReference>
<dbReference type="SUPFAM" id="SSF46785">
    <property type="entry name" value="Winged helix' DNA-binding domain"/>
    <property type="match status" value="1"/>
</dbReference>
<dbReference type="PROSITE" id="PS51344">
    <property type="entry name" value="HTH_TFE_IIE"/>
    <property type="match status" value="1"/>
</dbReference>
<name>TFE_THEKO</name>
<protein>
    <recommendedName>
        <fullName evidence="1">Transcription factor E</fullName>
        <shortName evidence="1">TFE</shortName>
    </recommendedName>
    <alternativeName>
        <fullName evidence="1">TFIIE subunit alpha homolog</fullName>
    </alternativeName>
    <alternativeName>
        <fullName evidence="1">Transcription initiation factor TFIIE</fullName>
    </alternativeName>
</protein>
<accession>Q5JDD5</accession>
<comment type="function">
    <text evidence="1">Transcription factor that plays a role in the activation of archaeal genes transcribed by RNA polymerase. Facilitates transcription initiation by enhancing TATA-box recognition by TATA-box-binding protein (Tbp), and transcription factor B (Tfb) and RNA polymerase recruitment. Not absolutely required for transcription in vitro, but particularly important in cases where Tbp or Tfb function is not optimal. It dynamically alters the nucleic acid-binding properties of RNA polymerases by stabilizing the initiation complex and destabilizing elongation complexes. Seems to translocate with the RNA polymerase following initiation and acts by binding to the non template strand of the transcription bubble in elongation complexes.</text>
</comment>
<comment type="subunit">
    <text evidence="1">Monomer. Interaction with RNA polymerase subunits RpoF and RpoE is necessary for Tfe stimulatory transcription activity. Able to interact with Tbp and RNA polymerase in the absence of DNA promoter. Interacts both with the preinitiation and elongation complexes.</text>
</comment>
<comment type="domain">
    <text evidence="1">The winged helix domain is involved in binding to DNA in the preinitiation complex.</text>
</comment>
<comment type="similarity">
    <text evidence="1">Belongs to the TFE family.</text>
</comment>
<feature type="chain" id="PRO_0000326621" description="Transcription factor E">
    <location>
        <begin position="1"/>
        <end position="185"/>
    </location>
</feature>
<feature type="domain" description="HTH TFE/IIEalpha-type" evidence="1">
    <location>
        <begin position="5"/>
        <end position="88"/>
    </location>
</feature>
<reference key="1">
    <citation type="journal article" date="2005" name="Genome Res.">
        <title>Complete genome sequence of the hyperthermophilic archaeon Thermococcus kodakaraensis KOD1 and comparison with Pyrococcus genomes.</title>
        <authorList>
            <person name="Fukui T."/>
            <person name="Atomi H."/>
            <person name="Kanai T."/>
            <person name="Matsumi R."/>
            <person name="Fujiwara S."/>
            <person name="Imanaka T."/>
        </authorList>
    </citation>
    <scope>NUCLEOTIDE SEQUENCE [LARGE SCALE GENOMIC DNA]</scope>
    <source>
        <strain>ATCC BAA-918 / JCM 12380 / KOD1</strain>
    </source>
</reference>
<evidence type="ECO:0000255" key="1">
    <source>
        <dbReference type="HAMAP-Rule" id="MF_01909"/>
    </source>
</evidence>
<keyword id="KW-0002">3D-structure</keyword>
<keyword id="KW-0238">DNA-binding</keyword>
<keyword id="KW-1185">Reference proteome</keyword>
<keyword id="KW-0804">Transcription</keyword>
<keyword id="KW-0805">Transcription regulation</keyword>
<organism>
    <name type="scientific">Thermococcus kodakarensis (strain ATCC BAA-918 / JCM 12380 / KOD1)</name>
    <name type="common">Pyrococcus kodakaraensis (strain KOD1)</name>
    <dbReference type="NCBI Taxonomy" id="69014"/>
    <lineage>
        <taxon>Archaea</taxon>
        <taxon>Methanobacteriati</taxon>
        <taxon>Methanobacteriota</taxon>
        <taxon>Thermococci</taxon>
        <taxon>Thermococcales</taxon>
        <taxon>Thermococcaceae</taxon>
        <taxon>Thermococcus</taxon>
    </lineage>
</organism>
<sequence length="185" mass="22050">MAKRKNKELLEIAQEIGGEEAVEVVKALEKMKEATDEELAEATGIRVNTVRRILYMLNDEGLADFKRIRDPETGWYYYYWRLETKKLPEIIRSRKMAELKKLKEMLEEETSEIYYWCGTEGHPKLTFDEAMEYEFQCPICGKMLMQYDNTHIIEELKRRIEELEIELGLKKKPRKTSKKKKSRSE</sequence>